<evidence type="ECO:0000255" key="1">
    <source>
        <dbReference type="HAMAP-Rule" id="MF_01338"/>
    </source>
</evidence>
<gene>
    <name evidence="1" type="primary">rbcL</name>
</gene>
<proteinExistence type="inferred from homology"/>
<protein>
    <recommendedName>
        <fullName evidence="1">Ribulose bisphosphate carboxylase large chain</fullName>
        <shortName evidence="1">RuBisCO large subunit</shortName>
        <ecNumber evidence="1">4.1.1.39</ecNumber>
    </recommendedName>
</protein>
<accession>O78259</accession>
<name>RBL_ABIHO</name>
<reference key="1">
    <citation type="journal article" date="1998" name="Evolution">
        <title>Differentiation of mitochondrial DNA polymorphisms in populations of five Japanese Abies species.</title>
        <authorList>
            <person name="Tsumura Y."/>
            <person name="Suyama Y."/>
        </authorList>
        <dbReference type="AGRICOLA" id="IND21806043"/>
    </citation>
    <scope>NUCLEOTIDE SEQUENCE [GENOMIC DNA]</scope>
</reference>
<dbReference type="EC" id="4.1.1.39" evidence="1"/>
<dbReference type="EMBL" id="AB015648">
    <property type="protein sequence ID" value="BAA31205.1"/>
    <property type="molecule type" value="Genomic_DNA"/>
</dbReference>
<dbReference type="SMR" id="O78259"/>
<dbReference type="GO" id="GO:0009507">
    <property type="term" value="C:chloroplast"/>
    <property type="evidence" value="ECO:0007669"/>
    <property type="project" value="UniProtKB-SubCell"/>
</dbReference>
<dbReference type="GO" id="GO:0000287">
    <property type="term" value="F:magnesium ion binding"/>
    <property type="evidence" value="ECO:0007669"/>
    <property type="project" value="InterPro"/>
</dbReference>
<dbReference type="GO" id="GO:0004497">
    <property type="term" value="F:monooxygenase activity"/>
    <property type="evidence" value="ECO:0007669"/>
    <property type="project" value="UniProtKB-KW"/>
</dbReference>
<dbReference type="GO" id="GO:0016984">
    <property type="term" value="F:ribulose-bisphosphate carboxylase activity"/>
    <property type="evidence" value="ECO:0007669"/>
    <property type="project" value="UniProtKB-EC"/>
</dbReference>
<dbReference type="GO" id="GO:0009853">
    <property type="term" value="P:photorespiration"/>
    <property type="evidence" value="ECO:0007669"/>
    <property type="project" value="UniProtKB-KW"/>
</dbReference>
<dbReference type="GO" id="GO:0019253">
    <property type="term" value="P:reductive pentose-phosphate cycle"/>
    <property type="evidence" value="ECO:0007669"/>
    <property type="project" value="UniProtKB-KW"/>
</dbReference>
<dbReference type="CDD" id="cd08212">
    <property type="entry name" value="RuBisCO_large_I"/>
    <property type="match status" value="1"/>
</dbReference>
<dbReference type="FunFam" id="3.20.20.110:FF:000003">
    <property type="entry name" value="Ribulose bisphosphate carboxylase large chain"/>
    <property type="match status" value="1"/>
</dbReference>
<dbReference type="FunFam" id="3.30.70.150:FF:000001">
    <property type="entry name" value="Ribulose bisphosphate carboxylase large chain"/>
    <property type="match status" value="1"/>
</dbReference>
<dbReference type="Gene3D" id="3.20.20.110">
    <property type="entry name" value="Ribulose bisphosphate carboxylase, large subunit, C-terminal domain"/>
    <property type="match status" value="1"/>
</dbReference>
<dbReference type="Gene3D" id="3.30.70.150">
    <property type="entry name" value="RuBisCO large subunit, N-terminal domain"/>
    <property type="match status" value="1"/>
</dbReference>
<dbReference type="HAMAP" id="MF_01338">
    <property type="entry name" value="RuBisCO_L_type1"/>
    <property type="match status" value="1"/>
</dbReference>
<dbReference type="InterPro" id="IPR033966">
    <property type="entry name" value="RuBisCO"/>
</dbReference>
<dbReference type="InterPro" id="IPR020878">
    <property type="entry name" value="RuBisCo_large_chain_AS"/>
</dbReference>
<dbReference type="InterPro" id="IPR000685">
    <property type="entry name" value="RuBisCO_lsu_C"/>
</dbReference>
<dbReference type="InterPro" id="IPR036376">
    <property type="entry name" value="RuBisCO_lsu_C_sf"/>
</dbReference>
<dbReference type="InterPro" id="IPR017443">
    <property type="entry name" value="RuBisCO_lsu_fd_N"/>
</dbReference>
<dbReference type="InterPro" id="IPR036422">
    <property type="entry name" value="RuBisCO_lsu_N_sf"/>
</dbReference>
<dbReference type="InterPro" id="IPR020888">
    <property type="entry name" value="RuBisCO_lsuI"/>
</dbReference>
<dbReference type="NCBIfam" id="NF003252">
    <property type="entry name" value="PRK04208.1"/>
    <property type="match status" value="1"/>
</dbReference>
<dbReference type="PANTHER" id="PTHR42704">
    <property type="entry name" value="RIBULOSE BISPHOSPHATE CARBOXYLASE"/>
    <property type="match status" value="1"/>
</dbReference>
<dbReference type="PANTHER" id="PTHR42704:SF15">
    <property type="entry name" value="RIBULOSE BISPHOSPHATE CARBOXYLASE LARGE CHAIN"/>
    <property type="match status" value="1"/>
</dbReference>
<dbReference type="Pfam" id="PF00016">
    <property type="entry name" value="RuBisCO_large"/>
    <property type="match status" value="1"/>
</dbReference>
<dbReference type="Pfam" id="PF02788">
    <property type="entry name" value="RuBisCO_large_N"/>
    <property type="match status" value="1"/>
</dbReference>
<dbReference type="SFLD" id="SFLDG01052">
    <property type="entry name" value="RuBisCO"/>
    <property type="match status" value="1"/>
</dbReference>
<dbReference type="SFLD" id="SFLDS00014">
    <property type="entry name" value="RuBisCO"/>
    <property type="match status" value="1"/>
</dbReference>
<dbReference type="SFLD" id="SFLDG00301">
    <property type="entry name" value="RuBisCO-like_proteins"/>
    <property type="match status" value="1"/>
</dbReference>
<dbReference type="SUPFAM" id="SSF51649">
    <property type="entry name" value="RuBisCo, C-terminal domain"/>
    <property type="match status" value="1"/>
</dbReference>
<dbReference type="SUPFAM" id="SSF54966">
    <property type="entry name" value="RuBisCO, large subunit, small (N-terminal) domain"/>
    <property type="match status" value="1"/>
</dbReference>
<dbReference type="PROSITE" id="PS00157">
    <property type="entry name" value="RUBISCO_LARGE"/>
    <property type="match status" value="1"/>
</dbReference>
<sequence>KASVGFKAGVKDYRLTYYTPEYQTKDTDILAAFRVTPQPGVPPEEAGAAVAAESSTGTWTTVWTDGLTSLDRYKGRCYDIEPVAGEESQFIAYVAYPLDLFEEGSVTNLFTSIVGNVFGFKALRALRLEDLRIPPAYSKTFQGPPHGIQVERDKLNKYGRPLLGCTIKPKLGLSAKNYGRAVYECLRGGLDFTKDDENVNSQPFMRWRDRFVFCAEAINKAQAETGEIKGHYLNATAGTCEEMMKRAIFARELGVPIVMHDYLTGGFTANTSLAHYCRDNGLLLHIHRAMHAVIDRQRNHGMHFRVLAKALRMSGGDHVHAGTVVGKLEGERDVTLGFVDLLRDDFIEKDRSRGIYFTQDWVSMPGVLPVASGGIHVWHMPALTEIFGDDSVLQFGGGTLGHPWGNAPGAVTNRVAVEACVQARNEGRDLAREGNEVIREACK</sequence>
<comment type="function">
    <text evidence="1">RuBisCO catalyzes two reactions: the carboxylation of D-ribulose 1,5-bisphosphate, the primary event in carbon dioxide fixation, as well as the oxidative fragmentation of the pentose substrate in the photorespiration process. Both reactions occur simultaneously and in competition at the same active site.</text>
</comment>
<comment type="catalytic activity">
    <reaction evidence="1">
        <text>2 (2R)-3-phosphoglycerate + 2 H(+) = D-ribulose 1,5-bisphosphate + CO2 + H2O</text>
        <dbReference type="Rhea" id="RHEA:23124"/>
        <dbReference type="ChEBI" id="CHEBI:15377"/>
        <dbReference type="ChEBI" id="CHEBI:15378"/>
        <dbReference type="ChEBI" id="CHEBI:16526"/>
        <dbReference type="ChEBI" id="CHEBI:57870"/>
        <dbReference type="ChEBI" id="CHEBI:58272"/>
        <dbReference type="EC" id="4.1.1.39"/>
    </reaction>
</comment>
<comment type="catalytic activity">
    <reaction evidence="1">
        <text>D-ribulose 1,5-bisphosphate + O2 = 2-phosphoglycolate + (2R)-3-phosphoglycerate + 2 H(+)</text>
        <dbReference type="Rhea" id="RHEA:36631"/>
        <dbReference type="ChEBI" id="CHEBI:15378"/>
        <dbReference type="ChEBI" id="CHEBI:15379"/>
        <dbReference type="ChEBI" id="CHEBI:57870"/>
        <dbReference type="ChEBI" id="CHEBI:58033"/>
        <dbReference type="ChEBI" id="CHEBI:58272"/>
    </reaction>
</comment>
<comment type="cofactor">
    <cofactor evidence="1">
        <name>Mg(2+)</name>
        <dbReference type="ChEBI" id="CHEBI:18420"/>
    </cofactor>
    <text evidence="1">Binds 1 Mg(2+) ion per subunit.</text>
</comment>
<comment type="subunit">
    <text evidence="1">Heterohexadecamer of 8 large chains and 8 small chains; disulfide-linked. The disulfide link is formed within the large subunit homodimers.</text>
</comment>
<comment type="subcellular location">
    <subcellularLocation>
        <location>Plastid</location>
        <location>Chloroplast</location>
    </subcellularLocation>
</comment>
<comment type="PTM">
    <text evidence="1">The disulfide bond which can form in the large chain dimeric partners within the hexadecamer appears to be associated with oxidative stress and protein turnover.</text>
</comment>
<comment type="miscellaneous">
    <text evidence="1">The basic functional RuBisCO is composed of a large chain homodimer in a 'head-to-tail' conformation. In form I RuBisCO this homodimer is arranged in a barrel-like tetramer with the small subunits forming a tetrameric 'cap' on each end of the 'barrel'.</text>
</comment>
<comment type="similarity">
    <text evidence="1">Belongs to the RuBisCO large chain family. Type I subfamily.</text>
</comment>
<feature type="chain" id="PRO_0000062332" description="Ribulose bisphosphate carboxylase large chain">
    <location>
        <begin position="1" status="less than"/>
        <end position="443" status="greater than"/>
    </location>
</feature>
<feature type="active site" description="Proton acceptor" evidence="1">
    <location>
        <position position="168"/>
    </location>
</feature>
<feature type="active site" description="Proton acceptor" evidence="1">
    <location>
        <position position="287"/>
    </location>
</feature>
<feature type="binding site" description="in homodimeric partner" evidence="1">
    <location>
        <position position="116"/>
    </location>
    <ligand>
        <name>substrate</name>
    </ligand>
</feature>
<feature type="binding site" evidence="1">
    <location>
        <position position="166"/>
    </location>
    <ligand>
        <name>substrate</name>
    </ligand>
</feature>
<feature type="binding site" evidence="1">
    <location>
        <position position="170"/>
    </location>
    <ligand>
        <name>substrate</name>
    </ligand>
</feature>
<feature type="binding site" description="via carbamate group" evidence="1">
    <location>
        <position position="194"/>
    </location>
    <ligand>
        <name>Mg(2+)</name>
        <dbReference type="ChEBI" id="CHEBI:18420"/>
    </ligand>
</feature>
<feature type="binding site" evidence="1">
    <location>
        <position position="196"/>
    </location>
    <ligand>
        <name>Mg(2+)</name>
        <dbReference type="ChEBI" id="CHEBI:18420"/>
    </ligand>
</feature>
<feature type="binding site" evidence="1">
    <location>
        <position position="197"/>
    </location>
    <ligand>
        <name>Mg(2+)</name>
        <dbReference type="ChEBI" id="CHEBI:18420"/>
    </ligand>
</feature>
<feature type="binding site" evidence="1">
    <location>
        <position position="288"/>
    </location>
    <ligand>
        <name>substrate</name>
    </ligand>
</feature>
<feature type="binding site" evidence="1">
    <location>
        <position position="320"/>
    </location>
    <ligand>
        <name>substrate</name>
    </ligand>
</feature>
<feature type="binding site" evidence="1">
    <location>
        <position position="372"/>
    </location>
    <ligand>
        <name>substrate</name>
    </ligand>
</feature>
<feature type="site" description="Transition state stabilizer" evidence="1">
    <location>
        <position position="327"/>
    </location>
</feature>
<feature type="modified residue" description="N6,N6,N6-trimethyllysine" evidence="1">
    <location>
        <position position="7"/>
    </location>
</feature>
<feature type="modified residue" description="N6-carboxylysine" evidence="1">
    <location>
        <position position="194"/>
    </location>
</feature>
<feature type="disulfide bond" description="Interchain; in linked form" evidence="1">
    <location>
        <position position="240"/>
    </location>
</feature>
<feature type="non-terminal residue">
    <location>
        <position position="1"/>
    </location>
</feature>
<feature type="non-terminal residue">
    <location>
        <position position="443"/>
    </location>
</feature>
<organism>
    <name type="scientific">Abies homolepis</name>
    <name type="common">Nikko fir</name>
    <dbReference type="NCBI Taxonomy" id="78261"/>
    <lineage>
        <taxon>Eukaryota</taxon>
        <taxon>Viridiplantae</taxon>
        <taxon>Streptophyta</taxon>
        <taxon>Embryophyta</taxon>
        <taxon>Tracheophyta</taxon>
        <taxon>Spermatophyta</taxon>
        <taxon>Pinopsida</taxon>
        <taxon>Pinidae</taxon>
        <taxon>Conifers I</taxon>
        <taxon>Pinales</taxon>
        <taxon>Pinaceae</taxon>
        <taxon>Abies</taxon>
    </lineage>
</organism>
<keyword id="KW-0113">Calvin cycle</keyword>
<keyword id="KW-0120">Carbon dioxide fixation</keyword>
<keyword id="KW-0150">Chloroplast</keyword>
<keyword id="KW-1015">Disulfide bond</keyword>
<keyword id="KW-0456">Lyase</keyword>
<keyword id="KW-0460">Magnesium</keyword>
<keyword id="KW-0479">Metal-binding</keyword>
<keyword id="KW-0488">Methylation</keyword>
<keyword id="KW-0503">Monooxygenase</keyword>
<keyword id="KW-0560">Oxidoreductase</keyword>
<keyword id="KW-0601">Photorespiration</keyword>
<keyword id="KW-0602">Photosynthesis</keyword>
<keyword id="KW-0934">Plastid</keyword>
<geneLocation type="chloroplast"/>